<dbReference type="EMBL" id="AJ965256">
    <property type="protein sequence ID" value="CAI83072.1"/>
    <property type="molecule type" value="Genomic_DNA"/>
</dbReference>
<dbReference type="RefSeq" id="WP_011309423.1">
    <property type="nucleotide sequence ID" value="NC_007356.1"/>
</dbReference>
<dbReference type="SMR" id="Q3ZXU4"/>
<dbReference type="KEGG" id="deh:cbdbA946"/>
<dbReference type="HOGENOM" id="CLU_089475_5_1_0"/>
<dbReference type="Proteomes" id="UP000000433">
    <property type="component" value="Chromosome"/>
</dbReference>
<dbReference type="GO" id="GO:0005829">
    <property type="term" value="C:cytosol"/>
    <property type="evidence" value="ECO:0007669"/>
    <property type="project" value="TreeGrafter"/>
</dbReference>
<dbReference type="GO" id="GO:0043024">
    <property type="term" value="F:ribosomal small subunit binding"/>
    <property type="evidence" value="ECO:0007669"/>
    <property type="project" value="TreeGrafter"/>
</dbReference>
<dbReference type="GO" id="GO:0030490">
    <property type="term" value="P:maturation of SSU-rRNA"/>
    <property type="evidence" value="ECO:0007669"/>
    <property type="project" value="UniProtKB-UniRule"/>
</dbReference>
<dbReference type="Gene3D" id="3.30.300.20">
    <property type="match status" value="1"/>
</dbReference>
<dbReference type="HAMAP" id="MF_00003">
    <property type="entry name" value="RbfA"/>
    <property type="match status" value="1"/>
</dbReference>
<dbReference type="InterPro" id="IPR015946">
    <property type="entry name" value="KH_dom-like_a/b"/>
</dbReference>
<dbReference type="InterPro" id="IPR000238">
    <property type="entry name" value="RbfA"/>
</dbReference>
<dbReference type="InterPro" id="IPR023799">
    <property type="entry name" value="RbfA_dom_sf"/>
</dbReference>
<dbReference type="InterPro" id="IPR020053">
    <property type="entry name" value="Ribosome-bd_factorA_CS"/>
</dbReference>
<dbReference type="NCBIfam" id="TIGR00082">
    <property type="entry name" value="rbfA"/>
    <property type="match status" value="1"/>
</dbReference>
<dbReference type="PANTHER" id="PTHR33515">
    <property type="entry name" value="RIBOSOME-BINDING FACTOR A, CHLOROPLASTIC-RELATED"/>
    <property type="match status" value="1"/>
</dbReference>
<dbReference type="PANTHER" id="PTHR33515:SF1">
    <property type="entry name" value="RIBOSOME-BINDING FACTOR A, CHLOROPLASTIC-RELATED"/>
    <property type="match status" value="1"/>
</dbReference>
<dbReference type="Pfam" id="PF02033">
    <property type="entry name" value="RBFA"/>
    <property type="match status" value="1"/>
</dbReference>
<dbReference type="SUPFAM" id="SSF89919">
    <property type="entry name" value="Ribosome-binding factor A, RbfA"/>
    <property type="match status" value="1"/>
</dbReference>
<dbReference type="PROSITE" id="PS01319">
    <property type="entry name" value="RBFA"/>
    <property type="match status" value="1"/>
</dbReference>
<feature type="chain" id="PRO_0000321217" description="Ribosome-binding factor A">
    <location>
        <begin position="1"/>
        <end position="118"/>
    </location>
</feature>
<sequence length="118" mass="13706">MSRRIKKLNQLFRADISALLQKEIRDPRLDTLLSVNEVDISEDMRHANVYVSHLAGDEHKDEILAALNAAAGFFRTEIAKKTDIRYMPVFHFVWDITIERGVRLNTLIDQVIHHQPED</sequence>
<gene>
    <name evidence="1" type="primary">rbfA</name>
    <name type="ordered locus">cbdbA946</name>
</gene>
<accession>Q3ZXU4</accession>
<keyword id="KW-0963">Cytoplasm</keyword>
<keyword id="KW-0690">Ribosome biogenesis</keyword>
<evidence type="ECO:0000255" key="1">
    <source>
        <dbReference type="HAMAP-Rule" id="MF_00003"/>
    </source>
</evidence>
<reference key="1">
    <citation type="journal article" date="2005" name="Nat. Biotechnol.">
        <title>Genome sequence of the chlorinated compound-respiring bacterium Dehalococcoides species strain CBDB1.</title>
        <authorList>
            <person name="Kube M."/>
            <person name="Beck A."/>
            <person name="Zinder S.H."/>
            <person name="Kuhl H."/>
            <person name="Reinhardt R."/>
            <person name="Adrian L."/>
        </authorList>
    </citation>
    <scope>NUCLEOTIDE SEQUENCE [LARGE SCALE GENOMIC DNA]</scope>
    <source>
        <strain>CBDB1</strain>
    </source>
</reference>
<comment type="function">
    <text evidence="1">One of several proteins that assist in the late maturation steps of the functional core of the 30S ribosomal subunit. Associates with free 30S ribosomal subunits (but not with 30S subunits that are part of 70S ribosomes or polysomes). Required for efficient processing of 16S rRNA. May interact with the 5'-terminal helix region of 16S rRNA.</text>
</comment>
<comment type="subunit">
    <text evidence="1">Monomer. Binds 30S ribosomal subunits, but not 50S ribosomal subunits or 70S ribosomes.</text>
</comment>
<comment type="subcellular location">
    <subcellularLocation>
        <location evidence="1">Cytoplasm</location>
    </subcellularLocation>
</comment>
<comment type="similarity">
    <text evidence="1">Belongs to the RbfA family.</text>
</comment>
<organism>
    <name type="scientific">Dehalococcoides mccartyi (strain CBDB1)</name>
    <dbReference type="NCBI Taxonomy" id="255470"/>
    <lineage>
        <taxon>Bacteria</taxon>
        <taxon>Bacillati</taxon>
        <taxon>Chloroflexota</taxon>
        <taxon>Dehalococcoidia</taxon>
        <taxon>Dehalococcoidales</taxon>
        <taxon>Dehalococcoidaceae</taxon>
        <taxon>Dehalococcoides</taxon>
    </lineage>
</organism>
<protein>
    <recommendedName>
        <fullName evidence="1">Ribosome-binding factor A</fullName>
    </recommendedName>
</protein>
<name>RBFA_DEHMC</name>
<proteinExistence type="inferred from homology"/>